<gene>
    <name evidence="1" type="primary">petA</name>
    <name type="ordered locus">tlr0960</name>
</gene>
<organism>
    <name type="scientific">Thermosynechococcus vestitus (strain NIES-2133 / IAM M-273 / BP-1)</name>
    <dbReference type="NCBI Taxonomy" id="197221"/>
    <lineage>
        <taxon>Bacteria</taxon>
        <taxon>Bacillati</taxon>
        <taxon>Cyanobacteriota</taxon>
        <taxon>Cyanophyceae</taxon>
        <taxon>Acaryochloridales</taxon>
        <taxon>Thermosynechococcaceae</taxon>
        <taxon>Thermosynechococcus</taxon>
    </lineage>
</organism>
<sequence>MKHFFKSLTLAIALAASVLFWSPQAQAYPFYAQQGYESPREATGRIVCANCHLAAKPIQVEVPQAVTPDSVFEAVVKIPYDTSVQQVLGDGSKGGLNVGAVLMLPEGFKIAPPDRLPEELQAKTSGIYYQPYSDDQQNIILVGPLPGEQYQEIVFPILAPNPGTDKSIHFGKYAVHAGGNRGRGQVYPNGEKSNNNVFTAPIAGTITSITPNPDGSTAVVITPENGEAVTETVPAGPELIVREGQTVVAGAALTNNPNVGGFGQKDTEIVLQDPNRIKWLLVFFAAITLSQILLVLKKKQVEKVQAAEMSF</sequence>
<proteinExistence type="inferred from homology"/>
<feature type="signal peptide" evidence="1">
    <location>
        <begin position="1"/>
        <end position="27"/>
    </location>
</feature>
<feature type="chain" id="PRO_0000361570" description="Cytochrome f">
    <location>
        <begin position="28"/>
        <end position="311"/>
    </location>
</feature>
<feature type="transmembrane region" description="Helical" evidence="1">
    <location>
        <begin position="279"/>
        <end position="296"/>
    </location>
</feature>
<feature type="binding site" description="axial binding residue" evidence="1">
    <location>
        <position position="28"/>
    </location>
    <ligand>
        <name>heme</name>
        <dbReference type="ChEBI" id="CHEBI:30413"/>
    </ligand>
    <ligandPart>
        <name>Fe</name>
        <dbReference type="ChEBI" id="CHEBI:18248"/>
    </ligandPart>
</feature>
<feature type="binding site" description="covalent" evidence="1">
    <location>
        <position position="48"/>
    </location>
    <ligand>
        <name>heme</name>
        <dbReference type="ChEBI" id="CHEBI:30413"/>
    </ligand>
</feature>
<feature type="binding site" description="covalent" evidence="1">
    <location>
        <position position="51"/>
    </location>
    <ligand>
        <name>heme</name>
        <dbReference type="ChEBI" id="CHEBI:30413"/>
    </ligand>
</feature>
<feature type="binding site" description="axial binding residue" evidence="1">
    <location>
        <position position="52"/>
    </location>
    <ligand>
        <name>heme</name>
        <dbReference type="ChEBI" id="CHEBI:30413"/>
    </ligand>
    <ligandPart>
        <name>Fe</name>
        <dbReference type="ChEBI" id="CHEBI:18248"/>
    </ligandPart>
</feature>
<keyword id="KW-0249">Electron transport</keyword>
<keyword id="KW-0349">Heme</keyword>
<keyword id="KW-0408">Iron</keyword>
<keyword id="KW-0472">Membrane</keyword>
<keyword id="KW-0479">Metal-binding</keyword>
<keyword id="KW-0602">Photosynthesis</keyword>
<keyword id="KW-1185">Reference proteome</keyword>
<keyword id="KW-0732">Signal</keyword>
<keyword id="KW-0793">Thylakoid</keyword>
<keyword id="KW-0812">Transmembrane</keyword>
<keyword id="KW-1133">Transmembrane helix</keyword>
<keyword id="KW-0813">Transport</keyword>
<evidence type="ECO:0000255" key="1">
    <source>
        <dbReference type="HAMAP-Rule" id="MF_00610"/>
    </source>
</evidence>
<accession>P0C8N5</accession>
<accession>Q9X9T1</accession>
<reference key="1">
    <citation type="journal article" date="2002" name="DNA Res.">
        <title>Complete genome structure of the thermophilic cyanobacterium Thermosynechococcus elongatus BP-1.</title>
        <authorList>
            <person name="Nakamura Y."/>
            <person name="Kaneko T."/>
            <person name="Sato S."/>
            <person name="Ikeuchi M."/>
            <person name="Katoh H."/>
            <person name="Sasamoto S."/>
            <person name="Watanabe A."/>
            <person name="Iriguchi M."/>
            <person name="Kawashima K."/>
            <person name="Kimura T."/>
            <person name="Kishida Y."/>
            <person name="Kiyokawa C."/>
            <person name="Kohara M."/>
            <person name="Matsumoto M."/>
            <person name="Matsuno A."/>
            <person name="Nakazaki N."/>
            <person name="Shimpo S."/>
            <person name="Sugimoto M."/>
            <person name="Takeuchi C."/>
            <person name="Yamada M."/>
            <person name="Tabata S."/>
        </authorList>
    </citation>
    <scope>NUCLEOTIDE SEQUENCE [LARGE SCALE GENOMIC DNA]</scope>
    <source>
        <strain>NIES-2133 / IAM M-273 / BP-1</strain>
    </source>
</reference>
<protein>
    <recommendedName>
        <fullName evidence="1">Cytochrome f</fullName>
    </recommendedName>
</protein>
<dbReference type="EMBL" id="BA000039">
    <property type="protein sequence ID" value="BAC08512.1"/>
    <property type="molecule type" value="Genomic_DNA"/>
</dbReference>
<dbReference type="RefSeq" id="NP_681750.1">
    <property type="nucleotide sequence ID" value="NC_004113.1"/>
</dbReference>
<dbReference type="RefSeq" id="WP_011056804.1">
    <property type="nucleotide sequence ID" value="NC_004113.1"/>
</dbReference>
<dbReference type="SMR" id="P0C8N5"/>
<dbReference type="STRING" id="197221.gene:10747552"/>
<dbReference type="EnsemblBacteria" id="BAC08512">
    <property type="protein sequence ID" value="BAC08512"/>
    <property type="gene ID" value="BAC08512"/>
</dbReference>
<dbReference type="KEGG" id="tel:tlr0960"/>
<dbReference type="PATRIC" id="fig|197221.4.peg.1007"/>
<dbReference type="eggNOG" id="COG0739">
    <property type="taxonomic scope" value="Bacteria"/>
</dbReference>
<dbReference type="Proteomes" id="UP000000440">
    <property type="component" value="Chromosome"/>
</dbReference>
<dbReference type="GO" id="GO:0031676">
    <property type="term" value="C:plasma membrane-derived thylakoid membrane"/>
    <property type="evidence" value="ECO:0007669"/>
    <property type="project" value="UniProtKB-SubCell"/>
</dbReference>
<dbReference type="GO" id="GO:0009055">
    <property type="term" value="F:electron transfer activity"/>
    <property type="evidence" value="ECO:0007669"/>
    <property type="project" value="UniProtKB-UniRule"/>
</dbReference>
<dbReference type="GO" id="GO:0020037">
    <property type="term" value="F:heme binding"/>
    <property type="evidence" value="ECO:0007669"/>
    <property type="project" value="InterPro"/>
</dbReference>
<dbReference type="GO" id="GO:0005506">
    <property type="term" value="F:iron ion binding"/>
    <property type="evidence" value="ECO:0007669"/>
    <property type="project" value="InterPro"/>
</dbReference>
<dbReference type="GO" id="GO:0015979">
    <property type="term" value="P:photosynthesis"/>
    <property type="evidence" value="ECO:0007669"/>
    <property type="project" value="UniProtKB-UniRule"/>
</dbReference>
<dbReference type="FunFam" id="2.60.40.830:FF:000001">
    <property type="entry name" value="Cytochrome f"/>
    <property type="match status" value="1"/>
</dbReference>
<dbReference type="Gene3D" id="2.40.50.100">
    <property type="match status" value="1"/>
</dbReference>
<dbReference type="Gene3D" id="2.60.40.830">
    <property type="entry name" value="Cytochrome f large domain"/>
    <property type="match status" value="1"/>
</dbReference>
<dbReference type="Gene3D" id="1.20.5.700">
    <property type="entry name" value="Single helix bin"/>
    <property type="match status" value="1"/>
</dbReference>
<dbReference type="HAMAP" id="MF_00610">
    <property type="entry name" value="Cytb6_f_cytF"/>
    <property type="match status" value="1"/>
</dbReference>
<dbReference type="InterPro" id="IPR024058">
    <property type="entry name" value="Cyt-f_TM"/>
</dbReference>
<dbReference type="InterPro" id="IPR002325">
    <property type="entry name" value="Cyt_f"/>
</dbReference>
<dbReference type="InterPro" id="IPR024094">
    <property type="entry name" value="Cyt_f_lg_dom"/>
</dbReference>
<dbReference type="InterPro" id="IPR036826">
    <property type="entry name" value="Cyt_f_lg_dom_sf"/>
</dbReference>
<dbReference type="InterPro" id="IPR011054">
    <property type="entry name" value="Rudment_hybrid_motif"/>
</dbReference>
<dbReference type="NCBIfam" id="NF002736">
    <property type="entry name" value="PRK02693.1"/>
    <property type="match status" value="1"/>
</dbReference>
<dbReference type="PANTHER" id="PTHR33288">
    <property type="match status" value="1"/>
</dbReference>
<dbReference type="PANTHER" id="PTHR33288:SF10">
    <property type="entry name" value="CYTOCHROME F"/>
    <property type="match status" value="1"/>
</dbReference>
<dbReference type="Pfam" id="PF01333">
    <property type="entry name" value="Apocytochr_F_C"/>
    <property type="match status" value="1"/>
</dbReference>
<dbReference type="Pfam" id="PF16639">
    <property type="entry name" value="Apocytochr_F_N"/>
    <property type="match status" value="1"/>
</dbReference>
<dbReference type="PRINTS" id="PR00610">
    <property type="entry name" value="CYTOCHROMEF"/>
</dbReference>
<dbReference type="SUPFAM" id="SSF103431">
    <property type="entry name" value="Cytochrome f subunit of the cytochrome b6f complex, transmembrane anchor"/>
    <property type="match status" value="1"/>
</dbReference>
<dbReference type="SUPFAM" id="SSF49441">
    <property type="entry name" value="Cytochrome f, large domain"/>
    <property type="match status" value="1"/>
</dbReference>
<dbReference type="SUPFAM" id="SSF51246">
    <property type="entry name" value="Rudiment single hybrid motif"/>
    <property type="match status" value="1"/>
</dbReference>
<dbReference type="PROSITE" id="PS51010">
    <property type="entry name" value="CYTF"/>
    <property type="match status" value="1"/>
</dbReference>
<comment type="function">
    <text evidence="1">Component of the cytochrome b6-f complex, which mediates electron transfer between photosystem II (PSII) and photosystem I (PSI), cyclic electron flow around PSI, and state transitions.</text>
</comment>
<comment type="cofactor">
    <cofactor evidence="1">
        <name>heme</name>
        <dbReference type="ChEBI" id="CHEBI:30413"/>
    </cofactor>
    <text evidence="1">Binds 1 heme group covalently.</text>
</comment>
<comment type="subunit">
    <text evidence="1">The 4 large subunits of the cytochrome b6-f complex are cytochrome b6, subunit IV (17 kDa polypeptide, PetD), cytochrome f and the Rieske protein, while the 4 small subunits are PetG, PetL, PetM and PetN. The complex functions as a dimer.</text>
</comment>
<comment type="subcellular location">
    <subcellularLocation>
        <location evidence="1">Cellular thylakoid membrane</location>
        <topology evidence="1">Single-pass membrane protein</topology>
    </subcellularLocation>
</comment>
<comment type="similarity">
    <text evidence="1">Belongs to the cytochrome f family.</text>
</comment>
<name>CYF_THEVB</name>